<protein>
    <recommendedName>
        <fullName evidence="1">3-demethoxyubiquinol 3-hydroxylase</fullName>
        <shortName evidence="1">DMQ hydroxylase</shortName>
        <ecNumber evidence="1">1.14.99.60</ecNumber>
    </recommendedName>
    <alternativeName>
        <fullName evidence="1">2-nonaprenyl-3-methyl-6-methoxy-1,4-benzoquinol hydroxylase</fullName>
    </alternativeName>
</protein>
<evidence type="ECO:0000255" key="1">
    <source>
        <dbReference type="HAMAP-Rule" id="MF_01658"/>
    </source>
</evidence>
<sequence>MSTSSSASALGRRAGPLDGLIGEIDRALRVLSGAATAARPYPAQAPEAPDALSEREKRHAAGLMRVNHVGEVCAQALYRGQAAACREPAARALLREAAAEEVDHLAWCHERLRELGSRPSLLNPFWYTGSFALGVLASYAGVPRNLGFMAETERQVEAHLDGHLRTLPVQDQRSRDIVQKMKEDEAQHRASAERAGGVPLPAPVRGAMRAMSKVMTSTAYWL</sequence>
<accession>Q7VUE5</accession>
<proteinExistence type="inferred from homology"/>
<keyword id="KW-1003">Cell membrane</keyword>
<keyword id="KW-0408">Iron</keyword>
<keyword id="KW-0472">Membrane</keyword>
<keyword id="KW-0479">Metal-binding</keyword>
<keyword id="KW-0503">Monooxygenase</keyword>
<keyword id="KW-0560">Oxidoreductase</keyword>
<keyword id="KW-1185">Reference proteome</keyword>
<keyword id="KW-0831">Ubiquinone biosynthesis</keyword>
<organism>
    <name type="scientific">Bordetella pertussis (strain Tohama I / ATCC BAA-589 / NCTC 13251)</name>
    <dbReference type="NCBI Taxonomy" id="257313"/>
    <lineage>
        <taxon>Bacteria</taxon>
        <taxon>Pseudomonadati</taxon>
        <taxon>Pseudomonadota</taxon>
        <taxon>Betaproteobacteria</taxon>
        <taxon>Burkholderiales</taxon>
        <taxon>Alcaligenaceae</taxon>
        <taxon>Bordetella</taxon>
    </lineage>
</organism>
<name>COQ7_BORPE</name>
<comment type="function">
    <text evidence="1">Catalyzes the hydroxylation of 2-nonaprenyl-3-methyl-6-methoxy-1,4-benzoquinol during ubiquinone biosynthesis.</text>
</comment>
<comment type="catalytic activity">
    <reaction evidence="1">
        <text>a 5-methoxy-2-methyl-3-(all-trans-polyprenyl)benzene-1,4-diol + AH2 + O2 = a 3-demethylubiquinol + A + H2O</text>
        <dbReference type="Rhea" id="RHEA:50908"/>
        <dbReference type="Rhea" id="RHEA-COMP:10859"/>
        <dbReference type="Rhea" id="RHEA-COMP:10914"/>
        <dbReference type="ChEBI" id="CHEBI:13193"/>
        <dbReference type="ChEBI" id="CHEBI:15377"/>
        <dbReference type="ChEBI" id="CHEBI:15379"/>
        <dbReference type="ChEBI" id="CHEBI:17499"/>
        <dbReference type="ChEBI" id="CHEBI:84167"/>
        <dbReference type="ChEBI" id="CHEBI:84422"/>
        <dbReference type="EC" id="1.14.99.60"/>
    </reaction>
</comment>
<comment type="cofactor">
    <cofactor evidence="1">
        <name>Fe cation</name>
        <dbReference type="ChEBI" id="CHEBI:24875"/>
    </cofactor>
    <text evidence="1">Binds 2 iron ions per subunit.</text>
</comment>
<comment type="pathway">
    <text evidence="1">Cofactor biosynthesis; ubiquinone biosynthesis.</text>
</comment>
<comment type="subcellular location">
    <subcellularLocation>
        <location evidence="1">Cell membrane</location>
        <topology evidence="1">Peripheral membrane protein</topology>
    </subcellularLocation>
</comment>
<comment type="similarity">
    <text evidence="1">Belongs to the COQ7 family.</text>
</comment>
<feature type="chain" id="PRO_0000338660" description="3-demethoxyubiquinol 3-hydroxylase">
    <location>
        <begin position="1"/>
        <end position="222"/>
    </location>
</feature>
<feature type="binding site" evidence="1">
    <location>
        <position position="71"/>
    </location>
    <ligand>
        <name>Fe cation</name>
        <dbReference type="ChEBI" id="CHEBI:24875"/>
        <label>1</label>
    </ligand>
</feature>
<feature type="binding site" evidence="1">
    <location>
        <position position="101"/>
    </location>
    <ligand>
        <name>Fe cation</name>
        <dbReference type="ChEBI" id="CHEBI:24875"/>
        <label>1</label>
    </ligand>
</feature>
<feature type="binding site" evidence="1">
    <location>
        <position position="101"/>
    </location>
    <ligand>
        <name>Fe cation</name>
        <dbReference type="ChEBI" id="CHEBI:24875"/>
        <label>2</label>
    </ligand>
</feature>
<feature type="binding site" evidence="1">
    <location>
        <position position="104"/>
    </location>
    <ligand>
        <name>Fe cation</name>
        <dbReference type="ChEBI" id="CHEBI:24875"/>
        <label>1</label>
    </ligand>
</feature>
<feature type="binding site" evidence="1">
    <location>
        <position position="153"/>
    </location>
    <ligand>
        <name>Fe cation</name>
        <dbReference type="ChEBI" id="CHEBI:24875"/>
        <label>2</label>
    </ligand>
</feature>
<feature type="binding site" evidence="1">
    <location>
        <position position="185"/>
    </location>
    <ligand>
        <name>Fe cation</name>
        <dbReference type="ChEBI" id="CHEBI:24875"/>
        <label>1</label>
    </ligand>
</feature>
<feature type="binding site" evidence="1">
    <location>
        <position position="185"/>
    </location>
    <ligand>
        <name>Fe cation</name>
        <dbReference type="ChEBI" id="CHEBI:24875"/>
        <label>2</label>
    </ligand>
</feature>
<feature type="binding site" evidence="1">
    <location>
        <position position="188"/>
    </location>
    <ligand>
        <name>Fe cation</name>
        <dbReference type="ChEBI" id="CHEBI:24875"/>
        <label>2</label>
    </ligand>
</feature>
<gene>
    <name evidence="1" type="primary">coq7</name>
    <name type="ordered locus">BP3152</name>
</gene>
<reference key="1">
    <citation type="journal article" date="2003" name="Nat. Genet.">
        <title>Comparative analysis of the genome sequences of Bordetella pertussis, Bordetella parapertussis and Bordetella bronchiseptica.</title>
        <authorList>
            <person name="Parkhill J."/>
            <person name="Sebaihia M."/>
            <person name="Preston A."/>
            <person name="Murphy L.D."/>
            <person name="Thomson N.R."/>
            <person name="Harris D.E."/>
            <person name="Holden M.T.G."/>
            <person name="Churcher C.M."/>
            <person name="Bentley S.D."/>
            <person name="Mungall K.L."/>
            <person name="Cerdeno-Tarraga A.-M."/>
            <person name="Temple L."/>
            <person name="James K.D."/>
            <person name="Harris B."/>
            <person name="Quail M.A."/>
            <person name="Achtman M."/>
            <person name="Atkin R."/>
            <person name="Baker S."/>
            <person name="Basham D."/>
            <person name="Bason N."/>
            <person name="Cherevach I."/>
            <person name="Chillingworth T."/>
            <person name="Collins M."/>
            <person name="Cronin A."/>
            <person name="Davis P."/>
            <person name="Doggett J."/>
            <person name="Feltwell T."/>
            <person name="Goble A."/>
            <person name="Hamlin N."/>
            <person name="Hauser H."/>
            <person name="Holroyd S."/>
            <person name="Jagels K."/>
            <person name="Leather S."/>
            <person name="Moule S."/>
            <person name="Norberczak H."/>
            <person name="O'Neil S."/>
            <person name="Ormond D."/>
            <person name="Price C."/>
            <person name="Rabbinowitsch E."/>
            <person name="Rutter S."/>
            <person name="Sanders M."/>
            <person name="Saunders D."/>
            <person name="Seeger K."/>
            <person name="Sharp S."/>
            <person name="Simmonds M."/>
            <person name="Skelton J."/>
            <person name="Squares R."/>
            <person name="Squares S."/>
            <person name="Stevens K."/>
            <person name="Unwin L."/>
            <person name="Whitehead S."/>
            <person name="Barrell B.G."/>
            <person name="Maskell D.J."/>
        </authorList>
    </citation>
    <scope>NUCLEOTIDE SEQUENCE [LARGE SCALE GENOMIC DNA]</scope>
    <source>
        <strain>Tohama I / ATCC BAA-589 / NCTC 13251</strain>
    </source>
</reference>
<dbReference type="EC" id="1.14.99.60" evidence="1"/>
<dbReference type="EMBL" id="BX640420">
    <property type="protein sequence ID" value="CAE43419.1"/>
    <property type="molecule type" value="Genomic_DNA"/>
</dbReference>
<dbReference type="RefSeq" id="NP_881717.1">
    <property type="nucleotide sequence ID" value="NC_002929.2"/>
</dbReference>
<dbReference type="RefSeq" id="WP_010931327.1">
    <property type="nucleotide sequence ID" value="NZ_CP039022.1"/>
</dbReference>
<dbReference type="SMR" id="Q7VUE5"/>
<dbReference type="STRING" id="257313.BP3152"/>
<dbReference type="PaxDb" id="257313-BP3152"/>
<dbReference type="GeneID" id="69603080"/>
<dbReference type="KEGG" id="bpe:BP3152"/>
<dbReference type="PATRIC" id="fig|257313.5.peg.3403"/>
<dbReference type="eggNOG" id="COG2941">
    <property type="taxonomic scope" value="Bacteria"/>
</dbReference>
<dbReference type="HOGENOM" id="CLU_088601_0_0_4"/>
<dbReference type="UniPathway" id="UPA00232"/>
<dbReference type="Proteomes" id="UP000002676">
    <property type="component" value="Chromosome"/>
</dbReference>
<dbReference type="GO" id="GO:0005886">
    <property type="term" value="C:plasma membrane"/>
    <property type="evidence" value="ECO:0007669"/>
    <property type="project" value="UniProtKB-SubCell"/>
</dbReference>
<dbReference type="GO" id="GO:0008682">
    <property type="term" value="F:3-demethoxyubiquinol 3-hydroxylase activity"/>
    <property type="evidence" value="ECO:0007669"/>
    <property type="project" value="UniProtKB-EC"/>
</dbReference>
<dbReference type="GO" id="GO:0046872">
    <property type="term" value="F:metal ion binding"/>
    <property type="evidence" value="ECO:0007669"/>
    <property type="project" value="UniProtKB-KW"/>
</dbReference>
<dbReference type="GO" id="GO:0006744">
    <property type="term" value="P:ubiquinone biosynthetic process"/>
    <property type="evidence" value="ECO:0007669"/>
    <property type="project" value="UniProtKB-UniRule"/>
</dbReference>
<dbReference type="CDD" id="cd01042">
    <property type="entry name" value="DMQH"/>
    <property type="match status" value="1"/>
</dbReference>
<dbReference type="Gene3D" id="1.20.1260.10">
    <property type="match status" value="1"/>
</dbReference>
<dbReference type="HAMAP" id="MF_01658">
    <property type="entry name" value="COQ7"/>
    <property type="match status" value="1"/>
</dbReference>
<dbReference type="InterPro" id="IPR047809">
    <property type="entry name" value="COQ7_proteobact"/>
</dbReference>
<dbReference type="InterPro" id="IPR012347">
    <property type="entry name" value="Ferritin-like"/>
</dbReference>
<dbReference type="InterPro" id="IPR009078">
    <property type="entry name" value="Ferritin-like_SF"/>
</dbReference>
<dbReference type="InterPro" id="IPR011566">
    <property type="entry name" value="Ubq_synth_Coq7"/>
</dbReference>
<dbReference type="NCBIfam" id="NF033656">
    <property type="entry name" value="DMQ_monoox_COQ7"/>
    <property type="match status" value="1"/>
</dbReference>
<dbReference type="PANTHER" id="PTHR11237:SF4">
    <property type="entry name" value="5-DEMETHOXYUBIQUINONE HYDROXYLASE, MITOCHONDRIAL"/>
    <property type="match status" value="1"/>
</dbReference>
<dbReference type="PANTHER" id="PTHR11237">
    <property type="entry name" value="COENZYME Q10 BIOSYNTHESIS PROTEIN 7"/>
    <property type="match status" value="1"/>
</dbReference>
<dbReference type="Pfam" id="PF03232">
    <property type="entry name" value="COQ7"/>
    <property type="match status" value="1"/>
</dbReference>
<dbReference type="SUPFAM" id="SSF47240">
    <property type="entry name" value="Ferritin-like"/>
    <property type="match status" value="1"/>
</dbReference>